<gene>
    <name evidence="1" type="primary">serC</name>
    <name type="ordered locus">RHA1_ro04992</name>
</gene>
<accession>Q0S6R3</accession>
<reference key="1">
    <citation type="journal article" date="2006" name="Proc. Natl. Acad. Sci. U.S.A.">
        <title>The complete genome of Rhodococcus sp. RHA1 provides insights into a catabolic powerhouse.</title>
        <authorList>
            <person name="McLeod M.P."/>
            <person name="Warren R.L."/>
            <person name="Hsiao W.W.L."/>
            <person name="Araki N."/>
            <person name="Myhre M."/>
            <person name="Fernandes C."/>
            <person name="Miyazawa D."/>
            <person name="Wong W."/>
            <person name="Lillquist A.L."/>
            <person name="Wang D."/>
            <person name="Dosanjh M."/>
            <person name="Hara H."/>
            <person name="Petrescu A."/>
            <person name="Morin R.D."/>
            <person name="Yang G."/>
            <person name="Stott J.M."/>
            <person name="Schein J.E."/>
            <person name="Shin H."/>
            <person name="Smailus D."/>
            <person name="Siddiqui A.S."/>
            <person name="Marra M.A."/>
            <person name="Jones S.J.M."/>
            <person name="Holt R."/>
            <person name="Brinkman F.S.L."/>
            <person name="Miyauchi K."/>
            <person name="Fukuda M."/>
            <person name="Davies J.E."/>
            <person name="Mohn W.W."/>
            <person name="Eltis L.D."/>
        </authorList>
    </citation>
    <scope>NUCLEOTIDE SEQUENCE [LARGE SCALE GENOMIC DNA]</scope>
    <source>
        <strain>RHA1</strain>
    </source>
</reference>
<evidence type="ECO:0000255" key="1">
    <source>
        <dbReference type="HAMAP-Rule" id="MF_00160"/>
    </source>
</evidence>
<dbReference type="EC" id="2.6.1.52" evidence="1"/>
<dbReference type="EMBL" id="CP000431">
    <property type="protein sequence ID" value="ABG96773.1"/>
    <property type="molecule type" value="Genomic_DNA"/>
</dbReference>
<dbReference type="RefSeq" id="WP_009478036.1">
    <property type="nucleotide sequence ID" value="NC_008268.1"/>
</dbReference>
<dbReference type="SMR" id="Q0S6R3"/>
<dbReference type="KEGG" id="rha:RHA1_ro04992"/>
<dbReference type="eggNOG" id="COG1932">
    <property type="taxonomic scope" value="Bacteria"/>
</dbReference>
<dbReference type="HOGENOM" id="CLU_061974_0_0_11"/>
<dbReference type="OrthoDB" id="975012at2"/>
<dbReference type="UniPathway" id="UPA00135">
    <property type="reaction ID" value="UER00197"/>
</dbReference>
<dbReference type="UniPathway" id="UPA00244">
    <property type="reaction ID" value="UER00311"/>
</dbReference>
<dbReference type="Proteomes" id="UP000008710">
    <property type="component" value="Chromosome"/>
</dbReference>
<dbReference type="GO" id="GO:0005737">
    <property type="term" value="C:cytoplasm"/>
    <property type="evidence" value="ECO:0007669"/>
    <property type="project" value="UniProtKB-SubCell"/>
</dbReference>
<dbReference type="GO" id="GO:0008453">
    <property type="term" value="F:alanine-glyoxylate transaminase activity"/>
    <property type="evidence" value="ECO:0007669"/>
    <property type="project" value="TreeGrafter"/>
</dbReference>
<dbReference type="GO" id="GO:0004760">
    <property type="term" value="F:L-serine-pyruvate transaminase activity"/>
    <property type="evidence" value="ECO:0007669"/>
    <property type="project" value="TreeGrafter"/>
</dbReference>
<dbReference type="GO" id="GO:0004648">
    <property type="term" value="F:O-phospho-L-serine:2-oxoglutarate aminotransferase activity"/>
    <property type="evidence" value="ECO:0007669"/>
    <property type="project" value="UniProtKB-UniRule"/>
</dbReference>
<dbReference type="GO" id="GO:0030170">
    <property type="term" value="F:pyridoxal phosphate binding"/>
    <property type="evidence" value="ECO:0007669"/>
    <property type="project" value="UniProtKB-UniRule"/>
</dbReference>
<dbReference type="GO" id="GO:0019265">
    <property type="term" value="P:glycine biosynthetic process, by transamination of glyoxylate"/>
    <property type="evidence" value="ECO:0007669"/>
    <property type="project" value="TreeGrafter"/>
</dbReference>
<dbReference type="GO" id="GO:0006564">
    <property type="term" value="P:L-serine biosynthetic process"/>
    <property type="evidence" value="ECO:0007669"/>
    <property type="project" value="UniProtKB-UniRule"/>
</dbReference>
<dbReference type="GO" id="GO:0008615">
    <property type="term" value="P:pyridoxine biosynthetic process"/>
    <property type="evidence" value="ECO:0007669"/>
    <property type="project" value="UniProtKB-UniRule"/>
</dbReference>
<dbReference type="Gene3D" id="3.90.1150.10">
    <property type="entry name" value="Aspartate Aminotransferase, domain 1"/>
    <property type="match status" value="1"/>
</dbReference>
<dbReference type="Gene3D" id="3.40.640.10">
    <property type="entry name" value="Type I PLP-dependent aspartate aminotransferase-like (Major domain)"/>
    <property type="match status" value="1"/>
</dbReference>
<dbReference type="HAMAP" id="MF_00160">
    <property type="entry name" value="SerC_aminotrans_5"/>
    <property type="match status" value="1"/>
</dbReference>
<dbReference type="InterPro" id="IPR000192">
    <property type="entry name" value="Aminotrans_V_dom"/>
</dbReference>
<dbReference type="InterPro" id="IPR022278">
    <property type="entry name" value="Pser_aminoTfrase"/>
</dbReference>
<dbReference type="InterPro" id="IPR006272">
    <property type="entry name" value="Pser_aminoTfrase_mycobac"/>
</dbReference>
<dbReference type="InterPro" id="IPR015424">
    <property type="entry name" value="PyrdxlP-dep_Trfase"/>
</dbReference>
<dbReference type="InterPro" id="IPR015421">
    <property type="entry name" value="PyrdxlP-dep_Trfase_major"/>
</dbReference>
<dbReference type="InterPro" id="IPR015422">
    <property type="entry name" value="PyrdxlP-dep_Trfase_small"/>
</dbReference>
<dbReference type="NCBIfam" id="TIGR01366">
    <property type="entry name" value="serC_3"/>
    <property type="match status" value="1"/>
</dbReference>
<dbReference type="PANTHER" id="PTHR21152:SF40">
    <property type="entry name" value="ALANINE--GLYOXYLATE AMINOTRANSFERASE"/>
    <property type="match status" value="1"/>
</dbReference>
<dbReference type="PANTHER" id="PTHR21152">
    <property type="entry name" value="AMINOTRANSFERASE CLASS V"/>
    <property type="match status" value="1"/>
</dbReference>
<dbReference type="Pfam" id="PF00266">
    <property type="entry name" value="Aminotran_5"/>
    <property type="match status" value="1"/>
</dbReference>
<dbReference type="PIRSF" id="PIRSF000525">
    <property type="entry name" value="SerC"/>
    <property type="match status" value="1"/>
</dbReference>
<dbReference type="SUPFAM" id="SSF53383">
    <property type="entry name" value="PLP-dependent transferases"/>
    <property type="match status" value="1"/>
</dbReference>
<name>SERC_RHOJR</name>
<proteinExistence type="inferred from homology"/>
<sequence length="373" mass="39598">MTSTPIIPADLLPADGRFGCGPSKVRPEQLQSLVEVGSSVFGTSHRQKPVKDVVASVRSGLADLFSLPEGYEVVLGNGGTTAFWDAAAFGLIREKSLHLTNGEFSSKFASVAKNNPFIGDPIVVSADPGSAPEPVSDPSVDLIGWAHNETSTGVAIPVSRPAGSENALIAIDATSGAGGLPVNVADADVYYFAPQKCFAADGGLWIALMSPKALERVAEIKDSGRWTPDFLSLPIAVDNSSKDQTYNTPALATLLLLANQIDWLNGKGGLDWATSRTADSSSRLYQWAEASEYATPFVTDPAHRSQVVGTIDFDDKIDAAQVAKILRANGVVDTEPYRKLGRNQLRVGMFPAIDPEDVSQLTKSIDWVVSQLG</sequence>
<feature type="chain" id="PRO_1000058222" description="Phosphoserine aminotransferase">
    <location>
        <begin position="1"/>
        <end position="373"/>
    </location>
</feature>
<feature type="binding site" evidence="1">
    <location>
        <position position="46"/>
    </location>
    <ligand>
        <name>L-glutamate</name>
        <dbReference type="ChEBI" id="CHEBI:29985"/>
    </ligand>
</feature>
<feature type="binding site" evidence="1">
    <location>
        <position position="104"/>
    </location>
    <ligand>
        <name>pyridoxal 5'-phosphate</name>
        <dbReference type="ChEBI" id="CHEBI:597326"/>
    </ligand>
</feature>
<feature type="binding site" evidence="1">
    <location>
        <position position="150"/>
    </location>
    <ligand>
        <name>pyridoxal 5'-phosphate</name>
        <dbReference type="ChEBI" id="CHEBI:597326"/>
    </ligand>
</feature>
<feature type="binding site" evidence="1">
    <location>
        <position position="172"/>
    </location>
    <ligand>
        <name>pyridoxal 5'-phosphate</name>
        <dbReference type="ChEBI" id="CHEBI:597326"/>
    </ligand>
</feature>
<feature type="binding site" evidence="1">
    <location>
        <position position="195"/>
    </location>
    <ligand>
        <name>pyridoxal 5'-phosphate</name>
        <dbReference type="ChEBI" id="CHEBI:597326"/>
    </ligand>
</feature>
<feature type="binding site" evidence="1">
    <location>
        <begin position="247"/>
        <end position="248"/>
    </location>
    <ligand>
        <name>pyridoxal 5'-phosphate</name>
        <dbReference type="ChEBI" id="CHEBI:597326"/>
    </ligand>
</feature>
<feature type="modified residue" description="N6-(pyridoxal phosphate)lysine" evidence="1">
    <location>
        <position position="196"/>
    </location>
</feature>
<keyword id="KW-0028">Amino-acid biosynthesis</keyword>
<keyword id="KW-0032">Aminotransferase</keyword>
<keyword id="KW-0963">Cytoplasm</keyword>
<keyword id="KW-0663">Pyridoxal phosphate</keyword>
<keyword id="KW-0664">Pyridoxine biosynthesis</keyword>
<keyword id="KW-0718">Serine biosynthesis</keyword>
<keyword id="KW-0808">Transferase</keyword>
<protein>
    <recommendedName>
        <fullName evidence="1">Phosphoserine aminotransferase</fullName>
        <ecNumber evidence="1">2.6.1.52</ecNumber>
    </recommendedName>
    <alternativeName>
        <fullName evidence="1">Phosphohydroxythreonine aminotransferase</fullName>
        <shortName evidence="1">PSAT</shortName>
    </alternativeName>
</protein>
<comment type="function">
    <text evidence="1">Catalyzes the reversible conversion of 3-phosphohydroxypyruvate to phosphoserine and of 3-hydroxy-2-oxo-4-phosphonooxybutanoate to phosphohydroxythreonine.</text>
</comment>
<comment type="catalytic activity">
    <reaction evidence="1">
        <text>O-phospho-L-serine + 2-oxoglutarate = 3-phosphooxypyruvate + L-glutamate</text>
        <dbReference type="Rhea" id="RHEA:14329"/>
        <dbReference type="ChEBI" id="CHEBI:16810"/>
        <dbReference type="ChEBI" id="CHEBI:18110"/>
        <dbReference type="ChEBI" id="CHEBI:29985"/>
        <dbReference type="ChEBI" id="CHEBI:57524"/>
        <dbReference type="EC" id="2.6.1.52"/>
    </reaction>
</comment>
<comment type="catalytic activity">
    <reaction evidence="1">
        <text>4-(phosphooxy)-L-threonine + 2-oxoglutarate = (R)-3-hydroxy-2-oxo-4-phosphooxybutanoate + L-glutamate</text>
        <dbReference type="Rhea" id="RHEA:16573"/>
        <dbReference type="ChEBI" id="CHEBI:16810"/>
        <dbReference type="ChEBI" id="CHEBI:29985"/>
        <dbReference type="ChEBI" id="CHEBI:58452"/>
        <dbReference type="ChEBI" id="CHEBI:58538"/>
        <dbReference type="EC" id="2.6.1.52"/>
    </reaction>
</comment>
<comment type="cofactor">
    <cofactor evidence="1">
        <name>pyridoxal 5'-phosphate</name>
        <dbReference type="ChEBI" id="CHEBI:597326"/>
    </cofactor>
    <text evidence="1">Binds 1 pyridoxal phosphate per subunit.</text>
</comment>
<comment type="pathway">
    <text evidence="1">Amino-acid biosynthesis; L-serine biosynthesis; L-serine from 3-phospho-D-glycerate: step 2/3.</text>
</comment>
<comment type="pathway">
    <text evidence="1">Cofactor biosynthesis; pyridoxine 5'-phosphate biosynthesis; pyridoxine 5'-phosphate from D-erythrose 4-phosphate: step 3/5.</text>
</comment>
<comment type="subunit">
    <text evidence="1">Homodimer.</text>
</comment>
<comment type="subcellular location">
    <subcellularLocation>
        <location evidence="1">Cytoplasm</location>
    </subcellularLocation>
</comment>
<comment type="similarity">
    <text evidence="1">Belongs to the class-V pyridoxal-phosphate-dependent aminotransferase family. SerC subfamily.</text>
</comment>
<organism>
    <name type="scientific">Rhodococcus jostii (strain RHA1)</name>
    <dbReference type="NCBI Taxonomy" id="101510"/>
    <lineage>
        <taxon>Bacteria</taxon>
        <taxon>Bacillati</taxon>
        <taxon>Actinomycetota</taxon>
        <taxon>Actinomycetes</taxon>
        <taxon>Mycobacteriales</taxon>
        <taxon>Nocardiaceae</taxon>
        <taxon>Rhodococcus</taxon>
    </lineage>
</organism>